<dbReference type="EC" id="3.1.1.29" evidence="1"/>
<dbReference type="EMBL" id="AE009441">
    <property type="protein sequence ID" value="AAL62969.1"/>
    <property type="molecule type" value="Genomic_DNA"/>
</dbReference>
<dbReference type="RefSeq" id="WP_011007441.1">
    <property type="nucleotide sequence ID" value="NC_003364.1"/>
</dbReference>
<dbReference type="SMR" id="Q8ZYM4"/>
<dbReference type="FunCoup" id="Q8ZYM4">
    <property type="interactions" value="195"/>
</dbReference>
<dbReference type="STRING" id="178306.PAE0710"/>
<dbReference type="EnsemblBacteria" id="AAL62969">
    <property type="protein sequence ID" value="AAL62969"/>
    <property type="gene ID" value="PAE0710"/>
</dbReference>
<dbReference type="GeneID" id="1465195"/>
<dbReference type="KEGG" id="pai:PAE0710"/>
<dbReference type="PATRIC" id="fig|178306.9.peg.514"/>
<dbReference type="eggNOG" id="arCOG04228">
    <property type="taxonomic scope" value="Archaea"/>
</dbReference>
<dbReference type="HOGENOM" id="CLU_073661_2_2_2"/>
<dbReference type="InParanoid" id="Q8ZYM4"/>
<dbReference type="Proteomes" id="UP000002439">
    <property type="component" value="Chromosome"/>
</dbReference>
<dbReference type="GO" id="GO:0005829">
    <property type="term" value="C:cytosol"/>
    <property type="evidence" value="ECO:0000318"/>
    <property type="project" value="GO_Central"/>
</dbReference>
<dbReference type="GO" id="GO:0004045">
    <property type="term" value="F:peptidyl-tRNA hydrolase activity"/>
    <property type="evidence" value="ECO:0000318"/>
    <property type="project" value="GO_Central"/>
</dbReference>
<dbReference type="GO" id="GO:0006412">
    <property type="term" value="P:translation"/>
    <property type="evidence" value="ECO:0007669"/>
    <property type="project" value="UniProtKB-UniRule"/>
</dbReference>
<dbReference type="CDD" id="cd02430">
    <property type="entry name" value="PTH2"/>
    <property type="match status" value="1"/>
</dbReference>
<dbReference type="FunFam" id="3.40.1490.10:FF:000001">
    <property type="entry name" value="Peptidyl-tRNA hydrolase 2"/>
    <property type="match status" value="1"/>
</dbReference>
<dbReference type="Gene3D" id="3.40.1490.10">
    <property type="entry name" value="Bit1"/>
    <property type="match status" value="1"/>
</dbReference>
<dbReference type="HAMAP" id="MF_00628">
    <property type="entry name" value="Pept_tRNA_hydro_arch"/>
    <property type="match status" value="1"/>
</dbReference>
<dbReference type="InterPro" id="IPR023476">
    <property type="entry name" value="Pep_tRNA_hydro_II_dom_sf"/>
</dbReference>
<dbReference type="InterPro" id="IPR034759">
    <property type="entry name" value="Pept_tRNA_hydro_arch"/>
</dbReference>
<dbReference type="InterPro" id="IPR002833">
    <property type="entry name" value="PTH2"/>
</dbReference>
<dbReference type="NCBIfam" id="TIGR00283">
    <property type="entry name" value="arch_pth2"/>
    <property type="match status" value="1"/>
</dbReference>
<dbReference type="NCBIfam" id="NF003314">
    <property type="entry name" value="PRK04322.1"/>
    <property type="match status" value="1"/>
</dbReference>
<dbReference type="PANTHER" id="PTHR12649">
    <property type="entry name" value="PEPTIDYL-TRNA HYDROLASE 2"/>
    <property type="match status" value="1"/>
</dbReference>
<dbReference type="PANTHER" id="PTHR12649:SF11">
    <property type="entry name" value="PEPTIDYL-TRNA HYDROLASE 2, MITOCHONDRIAL"/>
    <property type="match status" value="1"/>
</dbReference>
<dbReference type="Pfam" id="PF01981">
    <property type="entry name" value="PTH2"/>
    <property type="match status" value="1"/>
</dbReference>
<dbReference type="SUPFAM" id="SSF102462">
    <property type="entry name" value="Peptidyl-tRNA hydrolase II"/>
    <property type="match status" value="1"/>
</dbReference>
<accession>Q8ZYM4</accession>
<sequence length="120" mass="12776">MDVKMTIAIRGDLKISCGKAAAQAGHAAVECVLAAMGDAKWRKWLDQWLEEGQKKIVLTADDAAHLYQLHERAKSLGLPTAVVIDAGLTELPPGTPTAICVGPAPDELVDKVTGSLKLYK</sequence>
<feature type="chain" id="PRO_0000120299" description="Peptidyl-tRNA hydrolase">
    <location>
        <begin position="1"/>
        <end position="120"/>
    </location>
</feature>
<reference key="1">
    <citation type="journal article" date="2002" name="Proc. Natl. Acad. Sci. U.S.A.">
        <title>Genome sequence of the hyperthermophilic crenarchaeon Pyrobaculum aerophilum.</title>
        <authorList>
            <person name="Fitz-Gibbon S.T."/>
            <person name="Ladner H."/>
            <person name="Kim U.-J."/>
            <person name="Stetter K.O."/>
            <person name="Simon M.I."/>
            <person name="Miller J.H."/>
        </authorList>
    </citation>
    <scope>NUCLEOTIDE SEQUENCE [LARGE SCALE GENOMIC DNA]</scope>
    <source>
        <strain>ATCC 51768 / DSM 7523 / JCM 9630 / CIP 104966 / NBRC 100827 / IM2</strain>
    </source>
</reference>
<comment type="function">
    <text evidence="1">The natural substrate for this enzyme may be peptidyl-tRNAs which drop off the ribosome during protein synthesis.</text>
</comment>
<comment type="catalytic activity">
    <reaction evidence="1">
        <text>an N-acyl-L-alpha-aminoacyl-tRNA + H2O = an N-acyl-L-amino acid + a tRNA + H(+)</text>
        <dbReference type="Rhea" id="RHEA:54448"/>
        <dbReference type="Rhea" id="RHEA-COMP:10123"/>
        <dbReference type="Rhea" id="RHEA-COMP:13883"/>
        <dbReference type="ChEBI" id="CHEBI:15377"/>
        <dbReference type="ChEBI" id="CHEBI:15378"/>
        <dbReference type="ChEBI" id="CHEBI:59874"/>
        <dbReference type="ChEBI" id="CHEBI:78442"/>
        <dbReference type="ChEBI" id="CHEBI:138191"/>
        <dbReference type="EC" id="3.1.1.29"/>
    </reaction>
</comment>
<comment type="subcellular location">
    <subcellularLocation>
        <location evidence="1">Cytoplasm</location>
    </subcellularLocation>
</comment>
<comment type="similarity">
    <text evidence="1">Belongs to the PTH2 family.</text>
</comment>
<organism>
    <name type="scientific">Pyrobaculum aerophilum (strain ATCC 51768 / DSM 7523 / JCM 9630 / CIP 104966 / NBRC 100827 / IM2)</name>
    <dbReference type="NCBI Taxonomy" id="178306"/>
    <lineage>
        <taxon>Archaea</taxon>
        <taxon>Thermoproteota</taxon>
        <taxon>Thermoprotei</taxon>
        <taxon>Thermoproteales</taxon>
        <taxon>Thermoproteaceae</taxon>
        <taxon>Pyrobaculum</taxon>
    </lineage>
</organism>
<evidence type="ECO:0000255" key="1">
    <source>
        <dbReference type="HAMAP-Rule" id="MF_00628"/>
    </source>
</evidence>
<proteinExistence type="inferred from homology"/>
<name>PTH_PYRAE</name>
<protein>
    <recommendedName>
        <fullName evidence="1">Peptidyl-tRNA hydrolase</fullName>
        <shortName evidence="1">PTH</shortName>
        <ecNumber evidence="1">3.1.1.29</ecNumber>
    </recommendedName>
</protein>
<gene>
    <name evidence="1" type="primary">pth</name>
    <name type="ordered locus">PAE0710</name>
</gene>
<keyword id="KW-0963">Cytoplasm</keyword>
<keyword id="KW-0378">Hydrolase</keyword>
<keyword id="KW-1185">Reference proteome</keyword>